<evidence type="ECO:0000255" key="1">
    <source>
        <dbReference type="HAMAP-Rule" id="MF_01322"/>
    </source>
</evidence>
<sequence length="1406" mass="154904">MKDLLKFLKAQTKTEEFDAIKIALASPDMIRSWSFGEVKKPETINYRTFKPERDGLFCARIFGPVKDYECLCGKYKRLKHRGVICEKCGVEVTQTKVRRERMGHIELASPTAHIWFLKSLPSRIGLLLDMPLRDIERVLYFESYVVIEGGMTNLERRQILTEEQYLDALEEFGDEFDAKMGAEAIQALLKNMDLEAECEILREELNETNSETKRKKLTKRIKLLEAFVQSGNKPEWMILTVLPVLPPDLRPLVPLDGGRFATSDLNDLYRRVINRNNRLKRLLDLAAPDIIVRNEKRMLQEAVDALLDNGRRGRAITGSNKRPLKSLADMIKGKQGRFRQNLLGKRVDYSGRSVITVGPYLRLHQCGLPKKMALELFKPFIYGKLELRGLATTIKAAKKMVEREEAVVWDILDEVIREHPVLLNRAPTLHRLGIQAFEPVLIEGKAIQLHPLVCAAYNADFDGDQMAVHVPLTLEAQLEARALMMSTNNILSPANGEPIIVPSQDVVLGLYYMTRDCVNAKGEGMVLTGPKEAERIYRAGLASLHARVKVRITEEIRNTEGESITRTSIIDTTVGRAILWMIVPQGLPYSIVNQPLGKKAISKMLNTCYRILGLKPTVIFADQIMYTGFAYAARSGASVGIDDMVIPEAKAGIIEEAETEVAEIQEQFQSGLVTAGERYNKVIDIWAAANERVAKAMMDNLSVEDVVNRDGVVEQQVSFNSIFMMADSGARGSAAQIRQLAGMRGLMAKPDGSIIETPITANFREGLNVLQYFISTHGARKGLADTALKTANSGYLTRRLVDVAQDLVVTEDDCGTHNGIVMTPVIEGGDVKEPLRDRVLGRVTAEEVIKPGSADILVPRNTLLDEKWCDLLEENSVDSVKVRSVVSCETDFGVCANCYGRDLARGHIINKGEAVGVIAAQSIGEPGTQLTMRTFHIGGAASRAAAESSIQVKNKGSLKLSNVKFVTNAAGKLVITSRNTELKLIDEFGRTKESYKVPYGAVMAKGDGAEVQGGETVANWDPHIMPVVTEVSGFIRFADMVDGQTITRQTDELTGLSSLVVLDSAERTGSGKDLRPALKIVDAKGNDVLIPGTDMPAQYFLPGKAIVQLEDGIQIGAGDTLARIPQESSGTKDITGGLPRVADLFEARRPKEPAILAEISGIISFGKETKGKRRLVISPLDGSDAYEEMIPKWRQLNVFEGEVVERGDVVSDGPESPHDILRLRGVHAVTRYITNEVQEVYRLQGVKINDKHIEVIVRQMLRKGTIVDAGSTDFLEGEQAEMSRVKIANRKLAAEGKIEATFTRDLLGITKASLATESFISAASFQETTRVLTEAAVAGKRDELRGLKENVIVGRLIPAGTGYAYHQDRMRRKAQGEAPVVPQVSADEATANLAELLNAGFGNNKG</sequence>
<protein>
    <recommendedName>
        <fullName evidence="1">DNA-directed RNA polymerase subunit beta'</fullName>
        <shortName evidence="1">RNAP subunit beta'</shortName>
        <ecNumber evidence="1">2.7.7.6</ecNumber>
    </recommendedName>
    <alternativeName>
        <fullName evidence="1">RNA polymerase subunit beta'</fullName>
    </alternativeName>
    <alternativeName>
        <fullName evidence="1">Transcriptase subunit beta'</fullName>
    </alternativeName>
</protein>
<name>RPOC_YERPG</name>
<organism>
    <name type="scientific">Yersinia pestis bv. Antiqua (strain Angola)</name>
    <dbReference type="NCBI Taxonomy" id="349746"/>
    <lineage>
        <taxon>Bacteria</taxon>
        <taxon>Pseudomonadati</taxon>
        <taxon>Pseudomonadota</taxon>
        <taxon>Gammaproteobacteria</taxon>
        <taxon>Enterobacterales</taxon>
        <taxon>Yersiniaceae</taxon>
        <taxon>Yersinia</taxon>
    </lineage>
</organism>
<proteinExistence type="inferred from homology"/>
<keyword id="KW-0240">DNA-directed RNA polymerase</keyword>
<keyword id="KW-0460">Magnesium</keyword>
<keyword id="KW-0479">Metal-binding</keyword>
<keyword id="KW-0548">Nucleotidyltransferase</keyword>
<keyword id="KW-0804">Transcription</keyword>
<keyword id="KW-0808">Transferase</keyword>
<keyword id="KW-0862">Zinc</keyword>
<accession>A9R0H9</accession>
<gene>
    <name evidence="1" type="primary">rpoC</name>
    <name type="ordered locus">YpAngola_A2811</name>
</gene>
<feature type="chain" id="PRO_0000353462" description="DNA-directed RNA polymerase subunit beta'">
    <location>
        <begin position="1"/>
        <end position="1406"/>
    </location>
</feature>
<feature type="binding site" evidence="1">
    <location>
        <position position="70"/>
    </location>
    <ligand>
        <name>Zn(2+)</name>
        <dbReference type="ChEBI" id="CHEBI:29105"/>
        <label>1</label>
    </ligand>
</feature>
<feature type="binding site" evidence="1">
    <location>
        <position position="72"/>
    </location>
    <ligand>
        <name>Zn(2+)</name>
        <dbReference type="ChEBI" id="CHEBI:29105"/>
        <label>1</label>
    </ligand>
</feature>
<feature type="binding site" evidence="1">
    <location>
        <position position="85"/>
    </location>
    <ligand>
        <name>Zn(2+)</name>
        <dbReference type="ChEBI" id="CHEBI:29105"/>
        <label>1</label>
    </ligand>
</feature>
<feature type="binding site" evidence="1">
    <location>
        <position position="88"/>
    </location>
    <ligand>
        <name>Zn(2+)</name>
        <dbReference type="ChEBI" id="CHEBI:29105"/>
        <label>1</label>
    </ligand>
</feature>
<feature type="binding site" evidence="1">
    <location>
        <position position="460"/>
    </location>
    <ligand>
        <name>Mg(2+)</name>
        <dbReference type="ChEBI" id="CHEBI:18420"/>
    </ligand>
</feature>
<feature type="binding site" evidence="1">
    <location>
        <position position="462"/>
    </location>
    <ligand>
        <name>Mg(2+)</name>
        <dbReference type="ChEBI" id="CHEBI:18420"/>
    </ligand>
</feature>
<feature type="binding site" evidence="1">
    <location>
        <position position="464"/>
    </location>
    <ligand>
        <name>Mg(2+)</name>
        <dbReference type="ChEBI" id="CHEBI:18420"/>
    </ligand>
</feature>
<feature type="binding site" evidence="1">
    <location>
        <position position="814"/>
    </location>
    <ligand>
        <name>Zn(2+)</name>
        <dbReference type="ChEBI" id="CHEBI:29105"/>
        <label>2</label>
    </ligand>
</feature>
<feature type="binding site" evidence="1">
    <location>
        <position position="888"/>
    </location>
    <ligand>
        <name>Zn(2+)</name>
        <dbReference type="ChEBI" id="CHEBI:29105"/>
        <label>2</label>
    </ligand>
</feature>
<feature type="binding site" evidence="1">
    <location>
        <position position="895"/>
    </location>
    <ligand>
        <name>Zn(2+)</name>
        <dbReference type="ChEBI" id="CHEBI:29105"/>
        <label>2</label>
    </ligand>
</feature>
<feature type="binding site" evidence="1">
    <location>
        <position position="898"/>
    </location>
    <ligand>
        <name>Zn(2+)</name>
        <dbReference type="ChEBI" id="CHEBI:29105"/>
        <label>2</label>
    </ligand>
</feature>
<reference key="1">
    <citation type="journal article" date="2010" name="J. Bacteriol.">
        <title>Genome sequence of the deep-rooted Yersinia pestis strain Angola reveals new insights into the evolution and pangenome of the plague bacterium.</title>
        <authorList>
            <person name="Eppinger M."/>
            <person name="Worsham P.L."/>
            <person name="Nikolich M.P."/>
            <person name="Riley D.R."/>
            <person name="Sebastian Y."/>
            <person name="Mou S."/>
            <person name="Achtman M."/>
            <person name="Lindler L.E."/>
            <person name="Ravel J."/>
        </authorList>
    </citation>
    <scope>NUCLEOTIDE SEQUENCE [LARGE SCALE GENOMIC DNA]</scope>
    <source>
        <strain>Angola</strain>
    </source>
</reference>
<dbReference type="EC" id="2.7.7.6" evidence="1"/>
<dbReference type="EMBL" id="CP000901">
    <property type="protein sequence ID" value="ABX85689.1"/>
    <property type="molecule type" value="Genomic_DNA"/>
</dbReference>
<dbReference type="RefSeq" id="WP_002210677.1">
    <property type="nucleotide sequence ID" value="NZ_CP009935.1"/>
</dbReference>
<dbReference type="SMR" id="A9R0H9"/>
<dbReference type="GeneID" id="96663777"/>
<dbReference type="KEGG" id="ypg:YpAngola_A2811"/>
<dbReference type="PATRIC" id="fig|349746.12.peg.3845"/>
<dbReference type="GO" id="GO:0000428">
    <property type="term" value="C:DNA-directed RNA polymerase complex"/>
    <property type="evidence" value="ECO:0007669"/>
    <property type="project" value="UniProtKB-KW"/>
</dbReference>
<dbReference type="GO" id="GO:0003677">
    <property type="term" value="F:DNA binding"/>
    <property type="evidence" value="ECO:0007669"/>
    <property type="project" value="UniProtKB-UniRule"/>
</dbReference>
<dbReference type="GO" id="GO:0003899">
    <property type="term" value="F:DNA-directed RNA polymerase activity"/>
    <property type="evidence" value="ECO:0007669"/>
    <property type="project" value="UniProtKB-UniRule"/>
</dbReference>
<dbReference type="GO" id="GO:0000287">
    <property type="term" value="F:magnesium ion binding"/>
    <property type="evidence" value="ECO:0007669"/>
    <property type="project" value="UniProtKB-UniRule"/>
</dbReference>
<dbReference type="GO" id="GO:0008270">
    <property type="term" value="F:zinc ion binding"/>
    <property type="evidence" value="ECO:0007669"/>
    <property type="project" value="UniProtKB-UniRule"/>
</dbReference>
<dbReference type="GO" id="GO:0006351">
    <property type="term" value="P:DNA-templated transcription"/>
    <property type="evidence" value="ECO:0007669"/>
    <property type="project" value="UniProtKB-UniRule"/>
</dbReference>
<dbReference type="CDD" id="cd02655">
    <property type="entry name" value="RNAP_beta'_C"/>
    <property type="match status" value="1"/>
</dbReference>
<dbReference type="CDD" id="cd01609">
    <property type="entry name" value="RNAP_beta'_N"/>
    <property type="match status" value="1"/>
</dbReference>
<dbReference type="FunFam" id="1.10.132.30:FF:000003">
    <property type="entry name" value="DNA-directed RNA polymerase subunit beta"/>
    <property type="match status" value="1"/>
</dbReference>
<dbReference type="FunFam" id="1.10.150.390:FF:000002">
    <property type="entry name" value="DNA-directed RNA polymerase subunit beta"/>
    <property type="match status" value="1"/>
</dbReference>
<dbReference type="FunFam" id="1.10.274.100:FF:000002">
    <property type="entry name" value="DNA-directed RNA polymerase subunit beta"/>
    <property type="match status" value="1"/>
</dbReference>
<dbReference type="FunFam" id="1.10.40.90:FF:000001">
    <property type="entry name" value="DNA-directed RNA polymerase subunit beta"/>
    <property type="match status" value="1"/>
</dbReference>
<dbReference type="FunFam" id="2.40.50.100:FF:000012">
    <property type="entry name" value="DNA-directed RNA polymerase subunit beta"/>
    <property type="match status" value="1"/>
</dbReference>
<dbReference type="FunFam" id="2.40.50.100:FF:000016">
    <property type="entry name" value="DNA-directed RNA polymerase subunit beta"/>
    <property type="match status" value="1"/>
</dbReference>
<dbReference type="FunFam" id="2.40.50.100:FF:000019">
    <property type="entry name" value="DNA-directed RNA polymerase subunit beta"/>
    <property type="match status" value="1"/>
</dbReference>
<dbReference type="FunFam" id="4.10.860.120:FF:000001">
    <property type="entry name" value="DNA-directed RNA polymerase subunit beta"/>
    <property type="match status" value="1"/>
</dbReference>
<dbReference type="Gene3D" id="1.10.132.30">
    <property type="match status" value="1"/>
</dbReference>
<dbReference type="Gene3D" id="1.10.150.390">
    <property type="match status" value="1"/>
</dbReference>
<dbReference type="Gene3D" id="1.10.1790.20">
    <property type="match status" value="1"/>
</dbReference>
<dbReference type="Gene3D" id="1.10.40.90">
    <property type="match status" value="1"/>
</dbReference>
<dbReference type="Gene3D" id="2.40.40.20">
    <property type="match status" value="1"/>
</dbReference>
<dbReference type="Gene3D" id="2.40.50.100">
    <property type="match status" value="3"/>
</dbReference>
<dbReference type="Gene3D" id="4.10.860.120">
    <property type="entry name" value="RNA polymerase II, clamp domain"/>
    <property type="match status" value="1"/>
</dbReference>
<dbReference type="Gene3D" id="1.10.274.100">
    <property type="entry name" value="RNA polymerase Rpb1, domain 3"/>
    <property type="match status" value="1"/>
</dbReference>
<dbReference type="HAMAP" id="MF_01322">
    <property type="entry name" value="RNApol_bact_RpoC"/>
    <property type="match status" value="1"/>
</dbReference>
<dbReference type="InterPro" id="IPR045867">
    <property type="entry name" value="DNA-dir_RpoC_beta_prime"/>
</dbReference>
<dbReference type="InterPro" id="IPR012754">
    <property type="entry name" value="DNA-dir_RpoC_beta_prime_bact"/>
</dbReference>
<dbReference type="InterPro" id="IPR000722">
    <property type="entry name" value="RNA_pol_asu"/>
</dbReference>
<dbReference type="InterPro" id="IPR006592">
    <property type="entry name" value="RNA_pol_N"/>
</dbReference>
<dbReference type="InterPro" id="IPR007080">
    <property type="entry name" value="RNA_pol_Rpb1_1"/>
</dbReference>
<dbReference type="InterPro" id="IPR007066">
    <property type="entry name" value="RNA_pol_Rpb1_3"/>
</dbReference>
<dbReference type="InterPro" id="IPR042102">
    <property type="entry name" value="RNA_pol_Rpb1_3_sf"/>
</dbReference>
<dbReference type="InterPro" id="IPR007083">
    <property type="entry name" value="RNA_pol_Rpb1_4"/>
</dbReference>
<dbReference type="InterPro" id="IPR007081">
    <property type="entry name" value="RNA_pol_Rpb1_5"/>
</dbReference>
<dbReference type="InterPro" id="IPR044893">
    <property type="entry name" value="RNA_pol_Rpb1_clamp_domain"/>
</dbReference>
<dbReference type="InterPro" id="IPR038120">
    <property type="entry name" value="Rpb1_funnel_sf"/>
</dbReference>
<dbReference type="NCBIfam" id="TIGR02386">
    <property type="entry name" value="rpoC_TIGR"/>
    <property type="match status" value="1"/>
</dbReference>
<dbReference type="PANTHER" id="PTHR19376">
    <property type="entry name" value="DNA-DIRECTED RNA POLYMERASE"/>
    <property type="match status" value="1"/>
</dbReference>
<dbReference type="PANTHER" id="PTHR19376:SF54">
    <property type="entry name" value="DNA-DIRECTED RNA POLYMERASE SUBUNIT BETA"/>
    <property type="match status" value="1"/>
</dbReference>
<dbReference type="Pfam" id="PF04997">
    <property type="entry name" value="RNA_pol_Rpb1_1"/>
    <property type="match status" value="1"/>
</dbReference>
<dbReference type="Pfam" id="PF00623">
    <property type="entry name" value="RNA_pol_Rpb1_2"/>
    <property type="match status" value="2"/>
</dbReference>
<dbReference type="Pfam" id="PF04983">
    <property type="entry name" value="RNA_pol_Rpb1_3"/>
    <property type="match status" value="1"/>
</dbReference>
<dbReference type="Pfam" id="PF05000">
    <property type="entry name" value="RNA_pol_Rpb1_4"/>
    <property type="match status" value="1"/>
</dbReference>
<dbReference type="Pfam" id="PF04998">
    <property type="entry name" value="RNA_pol_Rpb1_5"/>
    <property type="match status" value="1"/>
</dbReference>
<dbReference type="SMART" id="SM00663">
    <property type="entry name" value="RPOLA_N"/>
    <property type="match status" value="1"/>
</dbReference>
<dbReference type="SUPFAM" id="SSF64484">
    <property type="entry name" value="beta and beta-prime subunits of DNA dependent RNA-polymerase"/>
    <property type="match status" value="1"/>
</dbReference>
<comment type="function">
    <text evidence="1">DNA-dependent RNA polymerase catalyzes the transcription of DNA into RNA using the four ribonucleoside triphosphates as substrates.</text>
</comment>
<comment type="catalytic activity">
    <reaction evidence="1">
        <text>RNA(n) + a ribonucleoside 5'-triphosphate = RNA(n+1) + diphosphate</text>
        <dbReference type="Rhea" id="RHEA:21248"/>
        <dbReference type="Rhea" id="RHEA-COMP:14527"/>
        <dbReference type="Rhea" id="RHEA-COMP:17342"/>
        <dbReference type="ChEBI" id="CHEBI:33019"/>
        <dbReference type="ChEBI" id="CHEBI:61557"/>
        <dbReference type="ChEBI" id="CHEBI:140395"/>
        <dbReference type="EC" id="2.7.7.6"/>
    </reaction>
</comment>
<comment type="cofactor">
    <cofactor evidence="1">
        <name>Mg(2+)</name>
        <dbReference type="ChEBI" id="CHEBI:18420"/>
    </cofactor>
    <text evidence="1">Binds 1 Mg(2+) ion per subunit.</text>
</comment>
<comment type="cofactor">
    <cofactor evidence="1">
        <name>Zn(2+)</name>
        <dbReference type="ChEBI" id="CHEBI:29105"/>
    </cofactor>
    <text evidence="1">Binds 2 Zn(2+) ions per subunit.</text>
</comment>
<comment type="subunit">
    <text evidence="1">The RNAP catalytic core consists of 2 alpha, 1 beta, 1 beta' and 1 omega subunit. When a sigma factor is associated with the core the holoenzyme is formed, which can initiate transcription.</text>
</comment>
<comment type="similarity">
    <text evidence="1">Belongs to the RNA polymerase beta' chain family.</text>
</comment>